<feature type="chain" id="PRO_0000171228" description="Serine/threonine-protein kinase pkn2">
    <location>
        <begin position="1"/>
        <end position="830"/>
    </location>
</feature>
<feature type="topological domain" description="Cytoplasmic" evidence="1">
    <location>
        <begin position="1"/>
        <end position="605"/>
    </location>
</feature>
<feature type="transmembrane region" description="Helical" evidence="1">
    <location>
        <begin position="606"/>
        <end position="623"/>
    </location>
</feature>
<feature type="topological domain" description="Periplasmic" evidence="1">
    <location>
        <begin position="624"/>
        <end position="830"/>
    </location>
</feature>
<feature type="domain" description="Protein kinase" evidence="3">
    <location>
        <begin position="13"/>
        <end position="283"/>
    </location>
</feature>
<feature type="domain" description="Guanylate cyclase" evidence="2">
    <location>
        <begin position="396"/>
        <end position="511"/>
    </location>
</feature>
<feature type="region of interest" description="Disordered" evidence="5">
    <location>
        <begin position="296"/>
        <end position="326"/>
    </location>
</feature>
<feature type="compositionally biased region" description="Low complexity" evidence="5">
    <location>
        <begin position="299"/>
        <end position="326"/>
    </location>
</feature>
<feature type="active site" description="Proton acceptor" evidence="3 4">
    <location>
        <position position="135"/>
    </location>
</feature>
<feature type="binding site" evidence="3">
    <location>
        <begin position="19"/>
        <end position="27"/>
    </location>
    <ligand>
        <name>ATP</name>
        <dbReference type="ChEBI" id="CHEBI:30616"/>
    </ligand>
</feature>
<feature type="binding site" evidence="3">
    <location>
        <position position="42"/>
    </location>
    <ligand>
        <name>ATP</name>
        <dbReference type="ChEBI" id="CHEBI:30616"/>
    </ligand>
</feature>
<protein>
    <recommendedName>
        <fullName>Serine/threonine-protein kinase pkn2</fullName>
        <ecNumber>2.7.11.1</ecNumber>
    </recommendedName>
</protein>
<accession>P54736</accession>
<sequence>MLAPDSLVLDGRFRVLRPLGSGGMGEVYLGEQVSLGRKVAIKVLHHDLHAQAGMAERFKREARLLSAVEHPAVVRIVDFGESGDHACLVMEFVEGESLYDVLTPGPMPPGRALPLLQQLAEGLAAIHDKGIIHRDLKPENVFISKSARGEQARLLDFGIARLVEPDAASSVSQIGVVLGTPEYLSPEQAVGAKVDTRSDLYSFGVLTYRVLSGRLPFDGPLPRNFLSQHASAAPLPLDRAAPTLSRYVGLLSLVMRLLEKDASKRPQSAHELADALAAAHSALSAFTPGLGTPAYVPQPGSGATPSSGTSVFGTGSASGSSSGPTGTAAFAGVAPAPQASSGTAAFGVASSSGSASGALPAASPHTGTASFGLKSSGGVAAVTGGNASVVKPQNLTVMLTDIQGFTERTSRQTHEENARMLETHDKLLMPLVKEHDGRLVQKRGDALLVVFRSPTAGVLCGMAMQDRLWRHNQTVPEVDRLNVRVCLHAGEVLATPDSVLGEPMEVIEAVEHVASAGEVTFTEAVNLARNRAEATAEPCGAITLPGRNEQLQLYRCQRAAEGPPFGDRFASQGSRGNALAPLLAKLQAVKLPTGLGELLRQRRREAALVAGAVVLLGAGAAWLSQRNDAGTRAFALLEDGKLNEALALMDAATDEEKELPSLRRARVAANHAKGHHISERTALSHLKEEELEDVEPLILDGLAEDYGKEPLTVLGNALARFPKDRLRAHYEDLAEEAYSLRQWGALRYLEFVKAADGVNLVRAYSEALNSPDCDIRTQAANRLAGLGDADAIPAMERVTSLPKAKGLLGSKDCGHEAAATAIKSLKQKSD</sequence>
<gene>
    <name type="primary">pkn2</name>
</gene>
<proteinExistence type="inferred from homology"/>
<dbReference type="EC" id="2.7.11.1"/>
<dbReference type="EMBL" id="M94857">
    <property type="protein sequence ID" value="AAA98813.1"/>
    <property type="molecule type" value="Genomic_DNA"/>
</dbReference>
<dbReference type="PIR" id="A57060">
    <property type="entry name" value="A57060"/>
</dbReference>
<dbReference type="SMR" id="P54736"/>
<dbReference type="OMA" id="VMLTDIQ"/>
<dbReference type="BRENDA" id="2.7.11.1">
    <property type="organism ID" value="3551"/>
</dbReference>
<dbReference type="GO" id="GO:0005886">
    <property type="term" value="C:plasma membrane"/>
    <property type="evidence" value="ECO:0007669"/>
    <property type="project" value="UniProtKB-SubCell"/>
</dbReference>
<dbReference type="GO" id="GO:0004016">
    <property type="term" value="F:adenylate cyclase activity"/>
    <property type="evidence" value="ECO:0007669"/>
    <property type="project" value="UniProtKB-ARBA"/>
</dbReference>
<dbReference type="GO" id="GO:0005524">
    <property type="term" value="F:ATP binding"/>
    <property type="evidence" value="ECO:0007669"/>
    <property type="project" value="UniProtKB-KW"/>
</dbReference>
<dbReference type="GO" id="GO:0106310">
    <property type="term" value="F:protein serine kinase activity"/>
    <property type="evidence" value="ECO:0007669"/>
    <property type="project" value="RHEA"/>
</dbReference>
<dbReference type="GO" id="GO:0004674">
    <property type="term" value="F:protein serine/threonine kinase activity"/>
    <property type="evidence" value="ECO:0007669"/>
    <property type="project" value="UniProtKB-KW"/>
</dbReference>
<dbReference type="GO" id="GO:0009190">
    <property type="term" value="P:cyclic nucleotide biosynthetic process"/>
    <property type="evidence" value="ECO:0007669"/>
    <property type="project" value="InterPro"/>
</dbReference>
<dbReference type="GO" id="GO:0035556">
    <property type="term" value="P:intracellular signal transduction"/>
    <property type="evidence" value="ECO:0007669"/>
    <property type="project" value="InterPro"/>
</dbReference>
<dbReference type="CDD" id="cd07302">
    <property type="entry name" value="CHD"/>
    <property type="match status" value="1"/>
</dbReference>
<dbReference type="CDD" id="cd14014">
    <property type="entry name" value="STKc_PknB_like"/>
    <property type="match status" value="1"/>
</dbReference>
<dbReference type="Gene3D" id="3.30.70.1230">
    <property type="entry name" value="Nucleotide cyclase"/>
    <property type="match status" value="1"/>
</dbReference>
<dbReference type="Gene3D" id="3.30.200.20">
    <property type="entry name" value="Phosphorylase Kinase, domain 1"/>
    <property type="match status" value="1"/>
</dbReference>
<dbReference type="Gene3D" id="1.10.510.10">
    <property type="entry name" value="Transferase(Phosphotransferase) domain 1"/>
    <property type="match status" value="1"/>
</dbReference>
<dbReference type="InterPro" id="IPR001054">
    <property type="entry name" value="A/G_cyclase"/>
</dbReference>
<dbReference type="InterPro" id="IPR011009">
    <property type="entry name" value="Kinase-like_dom_sf"/>
</dbReference>
<dbReference type="InterPro" id="IPR029787">
    <property type="entry name" value="Nucleotide_cyclase"/>
</dbReference>
<dbReference type="InterPro" id="IPR000719">
    <property type="entry name" value="Prot_kinase_dom"/>
</dbReference>
<dbReference type="InterPro" id="IPR017441">
    <property type="entry name" value="Protein_kinase_ATP_BS"/>
</dbReference>
<dbReference type="InterPro" id="IPR008271">
    <property type="entry name" value="Ser/Thr_kinase_AS"/>
</dbReference>
<dbReference type="PANTHER" id="PTHR43289">
    <property type="entry name" value="MITOGEN-ACTIVATED PROTEIN KINASE KINASE KINASE 20-RELATED"/>
    <property type="match status" value="1"/>
</dbReference>
<dbReference type="PANTHER" id="PTHR43289:SF6">
    <property type="entry name" value="SERINE_THREONINE-PROTEIN KINASE NEKL-3"/>
    <property type="match status" value="1"/>
</dbReference>
<dbReference type="Pfam" id="PF00211">
    <property type="entry name" value="Guanylate_cyc"/>
    <property type="match status" value="1"/>
</dbReference>
<dbReference type="Pfam" id="PF00069">
    <property type="entry name" value="Pkinase"/>
    <property type="match status" value="1"/>
</dbReference>
<dbReference type="SMART" id="SM00044">
    <property type="entry name" value="CYCc"/>
    <property type="match status" value="1"/>
</dbReference>
<dbReference type="SMART" id="SM00220">
    <property type="entry name" value="S_TKc"/>
    <property type="match status" value="1"/>
</dbReference>
<dbReference type="SUPFAM" id="SSF55073">
    <property type="entry name" value="Nucleotide cyclase"/>
    <property type="match status" value="1"/>
</dbReference>
<dbReference type="SUPFAM" id="SSF56112">
    <property type="entry name" value="Protein kinase-like (PK-like)"/>
    <property type="match status" value="1"/>
</dbReference>
<dbReference type="PROSITE" id="PS50125">
    <property type="entry name" value="GUANYLATE_CYCLASE_2"/>
    <property type="match status" value="1"/>
</dbReference>
<dbReference type="PROSITE" id="PS00107">
    <property type="entry name" value="PROTEIN_KINASE_ATP"/>
    <property type="match status" value="1"/>
</dbReference>
<dbReference type="PROSITE" id="PS50011">
    <property type="entry name" value="PROTEIN_KINASE_DOM"/>
    <property type="match status" value="1"/>
</dbReference>
<dbReference type="PROSITE" id="PS00108">
    <property type="entry name" value="PROTEIN_KINASE_ST"/>
    <property type="match status" value="1"/>
</dbReference>
<reference key="1">
    <citation type="journal article" date="1995" name="Genes Dev.">
        <title>Myxococcus xanthus, a Gram-negative bacterium, contains a transmembrane protein serine/threonine kinase that blocks the secretion of beta-lactamase by phosphorylation.</title>
        <authorList>
            <person name="Udo H."/>
            <person name="Munoz-Dorado J."/>
            <person name="Inouye M."/>
            <person name="Inouye S."/>
        </authorList>
    </citation>
    <scope>NUCLEOTIDE SEQUENCE [GENOMIC DNA]</scope>
    <source>
        <strain>DZF1</strain>
    </source>
</reference>
<keyword id="KW-0067">ATP-binding</keyword>
<keyword id="KW-1003">Cell membrane</keyword>
<keyword id="KW-0418">Kinase</keyword>
<keyword id="KW-0472">Membrane</keyword>
<keyword id="KW-0547">Nucleotide-binding</keyword>
<keyword id="KW-0723">Serine/threonine-protein kinase</keyword>
<keyword id="KW-0808">Transferase</keyword>
<keyword id="KW-0812">Transmembrane</keyword>
<keyword id="KW-1133">Transmembrane helix</keyword>
<organism>
    <name type="scientific">Myxococcus xanthus</name>
    <dbReference type="NCBI Taxonomy" id="34"/>
    <lineage>
        <taxon>Bacteria</taxon>
        <taxon>Pseudomonadati</taxon>
        <taxon>Myxococcota</taxon>
        <taxon>Myxococcia</taxon>
        <taxon>Myxococcales</taxon>
        <taxon>Cystobacterineae</taxon>
        <taxon>Myxococcaceae</taxon>
        <taxon>Myxococcus</taxon>
    </lineage>
</organism>
<evidence type="ECO:0000255" key="1"/>
<evidence type="ECO:0000255" key="2">
    <source>
        <dbReference type="PROSITE-ProRule" id="PRU00099"/>
    </source>
</evidence>
<evidence type="ECO:0000255" key="3">
    <source>
        <dbReference type="PROSITE-ProRule" id="PRU00159"/>
    </source>
</evidence>
<evidence type="ECO:0000255" key="4">
    <source>
        <dbReference type="PROSITE-ProRule" id="PRU10027"/>
    </source>
</evidence>
<evidence type="ECO:0000256" key="5">
    <source>
        <dbReference type="SAM" id="MobiDB-lite"/>
    </source>
</evidence>
<evidence type="ECO:0000305" key="6"/>
<name>PKN2_MYXXA</name>
<comment type="function">
    <text>Regulates the activity of endogenous beta-lactamase or related enzymes, by blocking their secretion by phosphorylation, in response to an external signal yet to be identified.</text>
</comment>
<comment type="catalytic activity">
    <reaction>
        <text>L-seryl-[protein] + ATP = O-phospho-L-seryl-[protein] + ADP + H(+)</text>
        <dbReference type="Rhea" id="RHEA:17989"/>
        <dbReference type="Rhea" id="RHEA-COMP:9863"/>
        <dbReference type="Rhea" id="RHEA-COMP:11604"/>
        <dbReference type="ChEBI" id="CHEBI:15378"/>
        <dbReference type="ChEBI" id="CHEBI:29999"/>
        <dbReference type="ChEBI" id="CHEBI:30616"/>
        <dbReference type="ChEBI" id="CHEBI:83421"/>
        <dbReference type="ChEBI" id="CHEBI:456216"/>
        <dbReference type="EC" id="2.7.11.1"/>
    </reaction>
</comment>
<comment type="catalytic activity">
    <reaction>
        <text>L-threonyl-[protein] + ATP = O-phospho-L-threonyl-[protein] + ADP + H(+)</text>
        <dbReference type="Rhea" id="RHEA:46608"/>
        <dbReference type="Rhea" id="RHEA-COMP:11060"/>
        <dbReference type="Rhea" id="RHEA-COMP:11605"/>
        <dbReference type="ChEBI" id="CHEBI:15378"/>
        <dbReference type="ChEBI" id="CHEBI:30013"/>
        <dbReference type="ChEBI" id="CHEBI:30616"/>
        <dbReference type="ChEBI" id="CHEBI:61977"/>
        <dbReference type="ChEBI" id="CHEBI:456216"/>
        <dbReference type="EC" id="2.7.11.1"/>
    </reaction>
</comment>
<comment type="subcellular location">
    <subcellularLocation>
        <location evidence="6">Cell membrane</location>
        <topology evidence="6">Single-pass membrane protein</topology>
    </subcellularLocation>
</comment>
<comment type="similarity">
    <text evidence="3">Belongs to the protein kinase superfamily. Ser/Thr protein kinase family.</text>
</comment>